<feature type="chain" id="PRO_0000288222" description="tRNA (guanine-N(7)-)-methyltransferase">
    <location>
        <begin position="1"/>
        <end position="238"/>
    </location>
</feature>
<feature type="active site" evidence="1">
    <location>
        <position position="143"/>
    </location>
</feature>
<feature type="binding site" evidence="2">
    <location>
        <position position="68"/>
    </location>
    <ligand>
        <name>S-adenosyl-L-methionine</name>
        <dbReference type="ChEBI" id="CHEBI:59789"/>
    </ligand>
</feature>
<feature type="binding site" evidence="2">
    <location>
        <position position="93"/>
    </location>
    <ligand>
        <name>S-adenosyl-L-methionine</name>
        <dbReference type="ChEBI" id="CHEBI:59789"/>
    </ligand>
</feature>
<feature type="binding site" evidence="2">
    <location>
        <position position="120"/>
    </location>
    <ligand>
        <name>S-adenosyl-L-methionine</name>
        <dbReference type="ChEBI" id="CHEBI:59789"/>
    </ligand>
</feature>
<feature type="binding site" evidence="2">
    <location>
        <position position="143"/>
    </location>
    <ligand>
        <name>S-adenosyl-L-methionine</name>
        <dbReference type="ChEBI" id="CHEBI:59789"/>
    </ligand>
</feature>
<feature type="binding site" evidence="2">
    <location>
        <position position="147"/>
    </location>
    <ligand>
        <name>substrate</name>
    </ligand>
</feature>
<feature type="binding site" evidence="2">
    <location>
        <position position="179"/>
    </location>
    <ligand>
        <name>substrate</name>
    </ligand>
</feature>
<feature type="binding site" evidence="2">
    <location>
        <begin position="216"/>
        <end position="219"/>
    </location>
    <ligand>
        <name>substrate</name>
    </ligand>
</feature>
<sequence>MSDVTTAEFNEEGKYLRKIRSFVLREGRLTKGQAQAIEAHWPTMGLDYTPEAIDLVKIFGREADTVLEIGFGMGGSLVEMAAAAPELNYIGIEVHKPGVGACLGVAGEAKVTNLRVYHHDAMEVLEHSIADGSLSRVQLFFPDPWHKKRHHKRRIVQAEFAELIRRKLKLGGVFHMATDWENYSEHMLEVMNLAPGYKNQSPTGTVVERPDHRPLTKFEARGHRLGHGVWDIMFERIS</sequence>
<keyword id="KW-0489">Methyltransferase</keyword>
<keyword id="KW-1185">Reference proteome</keyword>
<keyword id="KW-0949">S-adenosyl-L-methionine</keyword>
<keyword id="KW-0808">Transferase</keyword>
<keyword id="KW-0819">tRNA processing</keyword>
<evidence type="ECO:0000250" key="1"/>
<evidence type="ECO:0000255" key="2">
    <source>
        <dbReference type="HAMAP-Rule" id="MF_01057"/>
    </source>
</evidence>
<dbReference type="EC" id="2.1.1.33" evidence="2"/>
<dbReference type="EMBL" id="CP000302">
    <property type="protein sequence ID" value="ABE55976.1"/>
    <property type="molecule type" value="Genomic_DNA"/>
</dbReference>
<dbReference type="RefSeq" id="WP_011497127.1">
    <property type="nucleotide sequence ID" value="NC_007954.1"/>
</dbReference>
<dbReference type="SMR" id="Q12KQ0"/>
<dbReference type="STRING" id="318161.Sden_2697"/>
<dbReference type="KEGG" id="sdn:Sden_2697"/>
<dbReference type="eggNOG" id="COG0220">
    <property type="taxonomic scope" value="Bacteria"/>
</dbReference>
<dbReference type="HOGENOM" id="CLU_050910_0_1_6"/>
<dbReference type="OrthoDB" id="9802090at2"/>
<dbReference type="UniPathway" id="UPA00989"/>
<dbReference type="Proteomes" id="UP000001982">
    <property type="component" value="Chromosome"/>
</dbReference>
<dbReference type="GO" id="GO:0043527">
    <property type="term" value="C:tRNA methyltransferase complex"/>
    <property type="evidence" value="ECO:0007669"/>
    <property type="project" value="TreeGrafter"/>
</dbReference>
<dbReference type="GO" id="GO:0008176">
    <property type="term" value="F:tRNA (guanine(46)-N7)-methyltransferase activity"/>
    <property type="evidence" value="ECO:0007669"/>
    <property type="project" value="UniProtKB-UniRule"/>
</dbReference>
<dbReference type="CDD" id="cd02440">
    <property type="entry name" value="AdoMet_MTases"/>
    <property type="match status" value="1"/>
</dbReference>
<dbReference type="FunFam" id="3.40.50.150:FF:000024">
    <property type="entry name" value="tRNA (guanine-N(7)-)-methyltransferase"/>
    <property type="match status" value="1"/>
</dbReference>
<dbReference type="Gene3D" id="3.40.50.150">
    <property type="entry name" value="Vaccinia Virus protein VP39"/>
    <property type="match status" value="1"/>
</dbReference>
<dbReference type="HAMAP" id="MF_01057">
    <property type="entry name" value="tRNA_methyltr_TrmB"/>
    <property type="match status" value="1"/>
</dbReference>
<dbReference type="InterPro" id="IPR029063">
    <property type="entry name" value="SAM-dependent_MTases_sf"/>
</dbReference>
<dbReference type="InterPro" id="IPR003358">
    <property type="entry name" value="tRNA_(Gua-N-7)_MeTrfase_Trmb"/>
</dbReference>
<dbReference type="InterPro" id="IPR055361">
    <property type="entry name" value="tRNA_methyltr_TrmB_bact"/>
</dbReference>
<dbReference type="NCBIfam" id="TIGR00091">
    <property type="entry name" value="tRNA (guanosine(46)-N7)-methyltransferase TrmB"/>
    <property type="match status" value="1"/>
</dbReference>
<dbReference type="PANTHER" id="PTHR23417">
    <property type="entry name" value="3-DEOXY-D-MANNO-OCTULOSONIC-ACID TRANSFERASE/TRNA GUANINE-N 7 - -METHYLTRANSFERASE"/>
    <property type="match status" value="1"/>
</dbReference>
<dbReference type="PANTHER" id="PTHR23417:SF14">
    <property type="entry name" value="PENTACOTRIPEPTIDE-REPEAT REGION OF PRORP DOMAIN-CONTAINING PROTEIN"/>
    <property type="match status" value="1"/>
</dbReference>
<dbReference type="Pfam" id="PF02390">
    <property type="entry name" value="Methyltransf_4"/>
    <property type="match status" value="1"/>
</dbReference>
<dbReference type="SUPFAM" id="SSF53335">
    <property type="entry name" value="S-adenosyl-L-methionine-dependent methyltransferases"/>
    <property type="match status" value="1"/>
</dbReference>
<dbReference type="PROSITE" id="PS51625">
    <property type="entry name" value="SAM_MT_TRMB"/>
    <property type="match status" value="1"/>
</dbReference>
<reference key="1">
    <citation type="submission" date="2006-03" db="EMBL/GenBank/DDBJ databases">
        <title>Complete sequence of Shewanella denitrificans OS217.</title>
        <authorList>
            <consortium name="US DOE Joint Genome Institute"/>
            <person name="Copeland A."/>
            <person name="Lucas S."/>
            <person name="Lapidus A."/>
            <person name="Barry K."/>
            <person name="Detter J.C."/>
            <person name="Glavina del Rio T."/>
            <person name="Hammon N."/>
            <person name="Israni S."/>
            <person name="Dalin E."/>
            <person name="Tice H."/>
            <person name="Pitluck S."/>
            <person name="Brettin T."/>
            <person name="Bruce D."/>
            <person name="Han C."/>
            <person name="Tapia R."/>
            <person name="Gilna P."/>
            <person name="Kiss H."/>
            <person name="Schmutz J."/>
            <person name="Larimer F."/>
            <person name="Land M."/>
            <person name="Hauser L."/>
            <person name="Kyrpides N."/>
            <person name="Lykidis A."/>
            <person name="Richardson P."/>
        </authorList>
    </citation>
    <scope>NUCLEOTIDE SEQUENCE [LARGE SCALE GENOMIC DNA]</scope>
    <source>
        <strain>OS217 / ATCC BAA-1090 / DSM 15013</strain>
    </source>
</reference>
<organism>
    <name type="scientific">Shewanella denitrificans (strain OS217 / ATCC BAA-1090 / DSM 15013)</name>
    <dbReference type="NCBI Taxonomy" id="318161"/>
    <lineage>
        <taxon>Bacteria</taxon>
        <taxon>Pseudomonadati</taxon>
        <taxon>Pseudomonadota</taxon>
        <taxon>Gammaproteobacteria</taxon>
        <taxon>Alteromonadales</taxon>
        <taxon>Shewanellaceae</taxon>
        <taxon>Shewanella</taxon>
    </lineage>
</organism>
<protein>
    <recommendedName>
        <fullName evidence="2">tRNA (guanine-N(7)-)-methyltransferase</fullName>
        <ecNumber evidence="2">2.1.1.33</ecNumber>
    </recommendedName>
    <alternativeName>
        <fullName evidence="2">tRNA (guanine(46)-N(7))-methyltransferase</fullName>
    </alternativeName>
    <alternativeName>
        <fullName evidence="2">tRNA(m7G46)-methyltransferase</fullName>
    </alternativeName>
</protein>
<accession>Q12KQ0</accession>
<comment type="function">
    <text evidence="2">Catalyzes the formation of N(7)-methylguanine at position 46 (m7G46) in tRNA.</text>
</comment>
<comment type="catalytic activity">
    <reaction evidence="2">
        <text>guanosine(46) in tRNA + S-adenosyl-L-methionine = N(7)-methylguanosine(46) in tRNA + S-adenosyl-L-homocysteine</text>
        <dbReference type="Rhea" id="RHEA:42708"/>
        <dbReference type="Rhea" id="RHEA-COMP:10188"/>
        <dbReference type="Rhea" id="RHEA-COMP:10189"/>
        <dbReference type="ChEBI" id="CHEBI:57856"/>
        <dbReference type="ChEBI" id="CHEBI:59789"/>
        <dbReference type="ChEBI" id="CHEBI:74269"/>
        <dbReference type="ChEBI" id="CHEBI:74480"/>
        <dbReference type="EC" id="2.1.1.33"/>
    </reaction>
</comment>
<comment type="pathway">
    <text evidence="2">tRNA modification; N(7)-methylguanine-tRNA biosynthesis.</text>
</comment>
<comment type="similarity">
    <text evidence="2">Belongs to the class I-like SAM-binding methyltransferase superfamily. TrmB family.</text>
</comment>
<name>TRMB_SHEDO</name>
<gene>
    <name evidence="2" type="primary">trmB</name>
    <name type="ordered locus">Sden_2697</name>
</gene>
<proteinExistence type="inferred from homology"/>